<proteinExistence type="evidence at protein level"/>
<accession>O50432</accession>
<accession>F2GG11</accession>
<accession>I6X0J4</accession>
<accession>L0T642</accession>
<organism>
    <name type="scientific">Mycobacterium tuberculosis (strain ATCC 25618 / H37Rv)</name>
    <dbReference type="NCBI Taxonomy" id="83332"/>
    <lineage>
        <taxon>Bacteria</taxon>
        <taxon>Bacillati</taxon>
        <taxon>Actinomycetota</taxon>
        <taxon>Actinomycetes</taxon>
        <taxon>Mycobacteriales</taxon>
        <taxon>Mycobacteriaceae</taxon>
        <taxon>Mycobacterium</taxon>
        <taxon>Mycobacterium tuberculosis complex</taxon>
    </lineage>
</organism>
<evidence type="ECO:0000269" key="1">
    <source>
    </source>
</evidence>
<evidence type="ECO:0000305" key="2"/>
<evidence type="ECO:0000312" key="3">
    <source>
        <dbReference type="EMBL" id="CCP43932.1"/>
    </source>
</evidence>
<evidence type="ECO:0007744" key="4">
    <source>
        <dbReference type="PDB" id="8IOI"/>
    </source>
</evidence>
<sequence length="189" mass="21077">MALPHAILVSLCEQASSGYELARRFDRSIGYFWTATHQQIYRTLRVMENNNWVRATTVLQHGRPDKKVYAISDSGRAELARWIAEPLSPTRPGRGSALTDSSTRDIAVKLRGAGYGDVAALYTQVTALRAERVKSLDTYRGIEKRTFADPSALDGAALHQYLVLRGGIRAEESAIDWLDEVAEALQEKR</sequence>
<gene>
    <name evidence="3" type="ordered locus">Rv1176c</name>
</gene>
<name>PADRL_MYCTU</name>
<protein>
    <recommendedName>
        <fullName evidence="2">Probable transcriptional regulator Rv1176c</fullName>
    </recommendedName>
</protein>
<comment type="function">
    <text evidence="1">Probable transcriptional regulator that may help mitigate the effect of oxidative stress and help mycobacteria survive inside macrophages (PubMed:38417748). Binds to its own promoter region (PubMed:38417748).</text>
</comment>
<comment type="subunit">
    <text evidence="1">Homodimer.</text>
</comment>
<comment type="subcellular location">
    <subcellularLocation>
        <location evidence="2">Cytoplasm</location>
    </subcellularLocation>
</comment>
<comment type="induction">
    <text evidence="1">Likely autoregulates its own transcription.</text>
</comment>
<comment type="domain">
    <text evidence="1">Contains an N-terminal domain (NTD), which harbors a winged helix-turn-helix (wHTH) motif that is used for DNA binding, and a C-terminal dimerization domain (CTD).</text>
</comment>
<comment type="similarity">
    <text evidence="2">Belongs to the PadR family.</text>
</comment>
<keyword id="KW-0002">3D-structure</keyword>
<keyword id="KW-0963">Cytoplasm</keyword>
<keyword id="KW-0238">DNA-binding</keyword>
<keyword id="KW-1185">Reference proteome</keyword>
<keyword id="KW-0804">Transcription</keyword>
<keyword id="KW-0805">Transcription regulation</keyword>
<dbReference type="EMBL" id="AL123456">
    <property type="protein sequence ID" value="CCP43932.1"/>
    <property type="molecule type" value="Genomic_DNA"/>
</dbReference>
<dbReference type="RefSeq" id="NP_215692.1">
    <property type="nucleotide sequence ID" value="NC_000962.3"/>
</dbReference>
<dbReference type="RefSeq" id="WP_003406182.1">
    <property type="nucleotide sequence ID" value="NZ_NVQJ01000025.1"/>
</dbReference>
<dbReference type="PDB" id="8IOI">
    <property type="method" value="X-ray"/>
    <property type="resolution" value="2.94 A"/>
    <property type="chains" value="A/B=1-189"/>
</dbReference>
<dbReference type="PDBsum" id="8IOI"/>
<dbReference type="SMR" id="O50432"/>
<dbReference type="STRING" id="83332.Rv1176c"/>
<dbReference type="PaxDb" id="83332-Rv1176c"/>
<dbReference type="DNASU" id="886080"/>
<dbReference type="GeneID" id="886080"/>
<dbReference type="KEGG" id="mtu:Rv1176c"/>
<dbReference type="KEGG" id="mtv:RVBD_1176c"/>
<dbReference type="PATRIC" id="fig|83332.111.peg.1317"/>
<dbReference type="TubercuList" id="Rv1176c"/>
<dbReference type="eggNOG" id="COG1695">
    <property type="taxonomic scope" value="Bacteria"/>
</dbReference>
<dbReference type="InParanoid" id="O50432"/>
<dbReference type="OrthoDB" id="3186544at2"/>
<dbReference type="PhylomeDB" id="O50432"/>
<dbReference type="Proteomes" id="UP000001584">
    <property type="component" value="Chromosome"/>
</dbReference>
<dbReference type="GO" id="GO:0005737">
    <property type="term" value="C:cytoplasm"/>
    <property type="evidence" value="ECO:0007669"/>
    <property type="project" value="UniProtKB-SubCell"/>
</dbReference>
<dbReference type="GO" id="GO:0009274">
    <property type="term" value="C:peptidoglycan-based cell wall"/>
    <property type="evidence" value="ECO:0007005"/>
    <property type="project" value="MTBBASE"/>
</dbReference>
<dbReference type="GO" id="GO:0003677">
    <property type="term" value="F:DNA binding"/>
    <property type="evidence" value="ECO:0007669"/>
    <property type="project" value="UniProtKB-KW"/>
</dbReference>
<dbReference type="Gene3D" id="6.10.140.190">
    <property type="match status" value="1"/>
</dbReference>
<dbReference type="Gene3D" id="1.10.10.10">
    <property type="entry name" value="Winged helix-like DNA-binding domain superfamily/Winged helix DNA-binding domain"/>
    <property type="match status" value="1"/>
</dbReference>
<dbReference type="InterPro" id="IPR018309">
    <property type="entry name" value="Tscrpt_reg_PadR_C"/>
</dbReference>
<dbReference type="InterPro" id="IPR005149">
    <property type="entry name" value="Tscrpt_reg_PadR_N"/>
</dbReference>
<dbReference type="InterPro" id="IPR036388">
    <property type="entry name" value="WH-like_DNA-bd_sf"/>
</dbReference>
<dbReference type="InterPro" id="IPR036390">
    <property type="entry name" value="WH_DNA-bd_sf"/>
</dbReference>
<dbReference type="PANTHER" id="PTHR43252">
    <property type="entry name" value="TRANSCRIPTIONAL REGULATOR YQJI"/>
    <property type="match status" value="1"/>
</dbReference>
<dbReference type="PANTHER" id="PTHR43252:SF4">
    <property type="entry name" value="TRANSCRIPTIONAL REGULATORY PROTEIN"/>
    <property type="match status" value="1"/>
</dbReference>
<dbReference type="Pfam" id="PF03551">
    <property type="entry name" value="PadR"/>
    <property type="match status" value="1"/>
</dbReference>
<dbReference type="Pfam" id="PF10400">
    <property type="entry name" value="Vir_act_alpha_C"/>
    <property type="match status" value="1"/>
</dbReference>
<dbReference type="SUPFAM" id="SSF46785">
    <property type="entry name" value="Winged helix' DNA-binding domain"/>
    <property type="match status" value="1"/>
</dbReference>
<feature type="chain" id="PRO_0000461195" description="Probable transcriptional regulator Rv1176c">
    <location>
        <begin position="1"/>
        <end position="189"/>
    </location>
</feature>
<reference key="1">
    <citation type="journal article" date="1998" name="Nature">
        <title>Deciphering the biology of Mycobacterium tuberculosis from the complete genome sequence.</title>
        <authorList>
            <person name="Cole S.T."/>
            <person name="Brosch R."/>
            <person name="Parkhill J."/>
            <person name="Garnier T."/>
            <person name="Churcher C.M."/>
            <person name="Harris D.E."/>
            <person name="Gordon S.V."/>
            <person name="Eiglmeier K."/>
            <person name="Gas S."/>
            <person name="Barry C.E. III"/>
            <person name="Tekaia F."/>
            <person name="Badcock K."/>
            <person name="Basham D."/>
            <person name="Brown D."/>
            <person name="Chillingworth T."/>
            <person name="Connor R."/>
            <person name="Davies R.M."/>
            <person name="Devlin K."/>
            <person name="Feltwell T."/>
            <person name="Gentles S."/>
            <person name="Hamlin N."/>
            <person name="Holroyd S."/>
            <person name="Hornsby T."/>
            <person name="Jagels K."/>
            <person name="Krogh A."/>
            <person name="McLean J."/>
            <person name="Moule S."/>
            <person name="Murphy L.D."/>
            <person name="Oliver S."/>
            <person name="Osborne J."/>
            <person name="Quail M.A."/>
            <person name="Rajandream M.A."/>
            <person name="Rogers J."/>
            <person name="Rutter S."/>
            <person name="Seeger K."/>
            <person name="Skelton S."/>
            <person name="Squares S."/>
            <person name="Squares R."/>
            <person name="Sulston J.E."/>
            <person name="Taylor K."/>
            <person name="Whitehead S."/>
            <person name="Barrell B.G."/>
        </authorList>
    </citation>
    <scope>NUCLEOTIDE SEQUENCE [LARGE SCALE GENOMIC DNA]</scope>
    <source>
        <strain>ATCC 25618 / H37Rv</strain>
    </source>
</reference>
<reference key="2">
    <citation type="journal article" date="2011" name="Mol. Cell. Proteomics">
        <title>Proteogenomic analysis of Mycobacterium tuberculosis by high resolution mass spectrometry.</title>
        <authorList>
            <person name="Kelkar D.S."/>
            <person name="Kumar D."/>
            <person name="Kumar P."/>
            <person name="Balakrishnan L."/>
            <person name="Muthusamy B."/>
            <person name="Yadav A.K."/>
            <person name="Shrivastava P."/>
            <person name="Marimuthu A."/>
            <person name="Anand S."/>
            <person name="Sundaram H."/>
            <person name="Kingsbury R."/>
            <person name="Harsha H.C."/>
            <person name="Nair B."/>
            <person name="Prasad T.S."/>
            <person name="Chauhan D.S."/>
            <person name="Katoch K."/>
            <person name="Katoch V.M."/>
            <person name="Kumar P."/>
            <person name="Chaerkady R."/>
            <person name="Ramachandran S."/>
            <person name="Dash D."/>
            <person name="Pandey A."/>
        </authorList>
    </citation>
    <scope>IDENTIFICATION BY MASS SPECTROMETRY [LARGE SCALE ANALYSIS]</scope>
    <source>
        <strain>ATCC 25618 / H37Rv</strain>
    </source>
</reference>
<reference evidence="4" key="3">
    <citation type="journal article" date="2024" name="Int. J. Biol. Macromol.">
        <title>Structural and biophysical characterization of PadR family protein Rv1176c of Mycobacterium tuberculosis H37Rv.</title>
        <authorList>
            <person name="Yadav V."/>
            <person name="Zohib M."/>
            <person name="Singh S."/>
            <person name="Pal R.K."/>
            <person name="Tripathi S."/>
            <person name="Jain A."/>
            <person name="Biswal B.K."/>
            <person name="Dasgupta A."/>
            <person name="Arora A."/>
        </authorList>
    </citation>
    <scope>X-RAY CRYSTALLOGRAPHY (2.94 ANGSTROMS)</scope>
    <scope>FUNCTION</scope>
    <scope>DNA-BINDING</scope>
    <scope>SUBUNIT</scope>
    <scope>INDUCTION</scope>
    <scope>DOMAIN</scope>
    <source>
        <strain>H37Rv</strain>
    </source>
</reference>